<proteinExistence type="inferred from homology"/>
<organism>
    <name type="scientific">Nitrobacter hamburgensis (strain DSM 10229 / NCIMB 13809 / X14)</name>
    <dbReference type="NCBI Taxonomy" id="323097"/>
    <lineage>
        <taxon>Bacteria</taxon>
        <taxon>Pseudomonadati</taxon>
        <taxon>Pseudomonadota</taxon>
        <taxon>Alphaproteobacteria</taxon>
        <taxon>Hyphomicrobiales</taxon>
        <taxon>Nitrobacteraceae</taxon>
        <taxon>Nitrobacter</taxon>
    </lineage>
</organism>
<name>AROC_NITHX</name>
<reference key="1">
    <citation type="submission" date="2006-03" db="EMBL/GenBank/DDBJ databases">
        <title>Complete sequence of chromosome of Nitrobacter hamburgensis X14.</title>
        <authorList>
            <consortium name="US DOE Joint Genome Institute"/>
            <person name="Copeland A."/>
            <person name="Lucas S."/>
            <person name="Lapidus A."/>
            <person name="Barry K."/>
            <person name="Detter J.C."/>
            <person name="Glavina del Rio T."/>
            <person name="Hammon N."/>
            <person name="Israni S."/>
            <person name="Dalin E."/>
            <person name="Tice H."/>
            <person name="Pitluck S."/>
            <person name="Chain P."/>
            <person name="Malfatti S."/>
            <person name="Shin M."/>
            <person name="Vergez L."/>
            <person name="Schmutz J."/>
            <person name="Larimer F."/>
            <person name="Land M."/>
            <person name="Hauser L."/>
            <person name="Kyrpides N."/>
            <person name="Ivanova N."/>
            <person name="Ward B."/>
            <person name="Arp D."/>
            <person name="Klotz M."/>
            <person name="Stein L."/>
            <person name="O'Mullan G."/>
            <person name="Starkenburg S."/>
            <person name="Sayavedra L."/>
            <person name="Poret-Peterson A.T."/>
            <person name="Gentry M.E."/>
            <person name="Bruce D."/>
            <person name="Richardson P."/>
        </authorList>
    </citation>
    <scope>NUCLEOTIDE SEQUENCE [LARGE SCALE GENOMIC DNA]</scope>
    <source>
        <strain>DSM 10229 / NCIMB 13809 / X14</strain>
    </source>
</reference>
<feature type="chain" id="PRO_0000256304" description="Chorismate synthase">
    <location>
        <begin position="1"/>
        <end position="366"/>
    </location>
</feature>
<feature type="binding site" evidence="1">
    <location>
        <position position="48"/>
    </location>
    <ligand>
        <name>NADP(+)</name>
        <dbReference type="ChEBI" id="CHEBI:58349"/>
    </ligand>
</feature>
<feature type="binding site" evidence="1">
    <location>
        <position position="54"/>
    </location>
    <ligand>
        <name>NADP(+)</name>
        <dbReference type="ChEBI" id="CHEBI:58349"/>
    </ligand>
</feature>
<feature type="binding site" evidence="1">
    <location>
        <begin position="129"/>
        <end position="131"/>
    </location>
    <ligand>
        <name>FMN</name>
        <dbReference type="ChEBI" id="CHEBI:58210"/>
    </ligand>
</feature>
<feature type="binding site" evidence="1">
    <location>
        <begin position="241"/>
        <end position="242"/>
    </location>
    <ligand>
        <name>FMN</name>
        <dbReference type="ChEBI" id="CHEBI:58210"/>
    </ligand>
</feature>
<feature type="binding site" evidence="1">
    <location>
        <position position="290"/>
    </location>
    <ligand>
        <name>FMN</name>
        <dbReference type="ChEBI" id="CHEBI:58210"/>
    </ligand>
</feature>
<feature type="binding site" evidence="1">
    <location>
        <begin position="305"/>
        <end position="309"/>
    </location>
    <ligand>
        <name>FMN</name>
        <dbReference type="ChEBI" id="CHEBI:58210"/>
    </ligand>
</feature>
<feature type="binding site" evidence="1">
    <location>
        <position position="331"/>
    </location>
    <ligand>
        <name>FMN</name>
        <dbReference type="ChEBI" id="CHEBI:58210"/>
    </ligand>
</feature>
<dbReference type="EC" id="4.2.3.5" evidence="1"/>
<dbReference type="EMBL" id="CP000319">
    <property type="protein sequence ID" value="ABE61651.1"/>
    <property type="molecule type" value="Genomic_DNA"/>
</dbReference>
<dbReference type="RefSeq" id="WP_011509353.1">
    <property type="nucleotide sequence ID" value="NC_007964.1"/>
</dbReference>
<dbReference type="SMR" id="Q1QQ46"/>
<dbReference type="STRING" id="323097.Nham_0770"/>
<dbReference type="KEGG" id="nha:Nham_0770"/>
<dbReference type="eggNOG" id="COG0082">
    <property type="taxonomic scope" value="Bacteria"/>
</dbReference>
<dbReference type="HOGENOM" id="CLU_034547_0_0_5"/>
<dbReference type="OrthoDB" id="9771806at2"/>
<dbReference type="UniPathway" id="UPA00053">
    <property type="reaction ID" value="UER00090"/>
</dbReference>
<dbReference type="Proteomes" id="UP000001953">
    <property type="component" value="Chromosome"/>
</dbReference>
<dbReference type="GO" id="GO:0005829">
    <property type="term" value="C:cytosol"/>
    <property type="evidence" value="ECO:0007669"/>
    <property type="project" value="TreeGrafter"/>
</dbReference>
<dbReference type="GO" id="GO:0004107">
    <property type="term" value="F:chorismate synthase activity"/>
    <property type="evidence" value="ECO:0007669"/>
    <property type="project" value="UniProtKB-UniRule"/>
</dbReference>
<dbReference type="GO" id="GO:0010181">
    <property type="term" value="F:FMN binding"/>
    <property type="evidence" value="ECO:0007669"/>
    <property type="project" value="TreeGrafter"/>
</dbReference>
<dbReference type="GO" id="GO:0008652">
    <property type="term" value="P:amino acid biosynthetic process"/>
    <property type="evidence" value="ECO:0007669"/>
    <property type="project" value="UniProtKB-KW"/>
</dbReference>
<dbReference type="GO" id="GO:0009073">
    <property type="term" value="P:aromatic amino acid family biosynthetic process"/>
    <property type="evidence" value="ECO:0007669"/>
    <property type="project" value="UniProtKB-KW"/>
</dbReference>
<dbReference type="GO" id="GO:0009423">
    <property type="term" value="P:chorismate biosynthetic process"/>
    <property type="evidence" value="ECO:0007669"/>
    <property type="project" value="UniProtKB-UniRule"/>
</dbReference>
<dbReference type="CDD" id="cd07304">
    <property type="entry name" value="Chorismate_synthase"/>
    <property type="match status" value="1"/>
</dbReference>
<dbReference type="Gene3D" id="3.60.150.10">
    <property type="entry name" value="Chorismate synthase AroC"/>
    <property type="match status" value="1"/>
</dbReference>
<dbReference type="HAMAP" id="MF_00300">
    <property type="entry name" value="Chorismate_synth"/>
    <property type="match status" value="1"/>
</dbReference>
<dbReference type="InterPro" id="IPR000453">
    <property type="entry name" value="Chorismate_synth"/>
</dbReference>
<dbReference type="InterPro" id="IPR035904">
    <property type="entry name" value="Chorismate_synth_AroC_sf"/>
</dbReference>
<dbReference type="InterPro" id="IPR020541">
    <property type="entry name" value="Chorismate_synthase_CS"/>
</dbReference>
<dbReference type="NCBIfam" id="TIGR00033">
    <property type="entry name" value="aroC"/>
    <property type="match status" value="1"/>
</dbReference>
<dbReference type="NCBIfam" id="NF003793">
    <property type="entry name" value="PRK05382.1"/>
    <property type="match status" value="1"/>
</dbReference>
<dbReference type="PANTHER" id="PTHR21085">
    <property type="entry name" value="CHORISMATE SYNTHASE"/>
    <property type="match status" value="1"/>
</dbReference>
<dbReference type="PANTHER" id="PTHR21085:SF0">
    <property type="entry name" value="CHORISMATE SYNTHASE"/>
    <property type="match status" value="1"/>
</dbReference>
<dbReference type="Pfam" id="PF01264">
    <property type="entry name" value="Chorismate_synt"/>
    <property type="match status" value="1"/>
</dbReference>
<dbReference type="PIRSF" id="PIRSF001456">
    <property type="entry name" value="Chorismate_synth"/>
    <property type="match status" value="1"/>
</dbReference>
<dbReference type="SUPFAM" id="SSF103263">
    <property type="entry name" value="Chorismate synthase, AroC"/>
    <property type="match status" value="1"/>
</dbReference>
<dbReference type="PROSITE" id="PS00787">
    <property type="entry name" value="CHORISMATE_SYNTHASE_1"/>
    <property type="match status" value="1"/>
</dbReference>
<dbReference type="PROSITE" id="PS00788">
    <property type="entry name" value="CHORISMATE_SYNTHASE_2"/>
    <property type="match status" value="1"/>
</dbReference>
<dbReference type="PROSITE" id="PS00789">
    <property type="entry name" value="CHORISMATE_SYNTHASE_3"/>
    <property type="match status" value="1"/>
</dbReference>
<sequence length="366" mass="39060">MSHNTFGHLFRVTTFGESHGVAIGCVVDGCPPQLALTVEEIQRDLDRRRPGQSRFTTQRQEADQVKILSGVMETASGQVTTGAPIALLIENTDQRSKDYSEIKDKFRPGHADFTYEAKYGLRDYRGGGRSSARETATRVAAGAIARKIVPGVTVRGALVQMGPHRIDREKWDWNEIARNPFFCPDKDKAAFFESYLDGIRKSGSSIGAVIEVVAEGVPAGLGAPIYAKLDGDLAAALMSINAVKGVEIGAGFGAAELSGEDNADEMRSSSSNMGNNGPVFLSNHAGGILGGISTGQPVVARFAVKPTSSILSPRKTVDRNGADTDIFTKGRHDPCVGIRAVPVGEAMVACVLADHFLRHRGQVGPR</sequence>
<evidence type="ECO:0000255" key="1">
    <source>
        <dbReference type="HAMAP-Rule" id="MF_00300"/>
    </source>
</evidence>
<accession>Q1QQ46</accession>
<protein>
    <recommendedName>
        <fullName evidence="1">Chorismate synthase</fullName>
        <shortName evidence="1">CS</shortName>
        <ecNumber evidence="1">4.2.3.5</ecNumber>
    </recommendedName>
    <alternativeName>
        <fullName evidence="1">5-enolpyruvylshikimate-3-phosphate phospholyase</fullName>
    </alternativeName>
</protein>
<gene>
    <name evidence="1" type="primary">aroC</name>
    <name type="ordered locus">Nham_0770</name>
</gene>
<comment type="function">
    <text evidence="1">Catalyzes the anti-1,4-elimination of the C-3 phosphate and the C-6 proR hydrogen from 5-enolpyruvylshikimate-3-phosphate (EPSP) to yield chorismate, which is the branch point compound that serves as the starting substrate for the three terminal pathways of aromatic amino acid biosynthesis. This reaction introduces a second double bond into the aromatic ring system.</text>
</comment>
<comment type="catalytic activity">
    <reaction evidence="1">
        <text>5-O-(1-carboxyvinyl)-3-phosphoshikimate = chorismate + phosphate</text>
        <dbReference type="Rhea" id="RHEA:21020"/>
        <dbReference type="ChEBI" id="CHEBI:29748"/>
        <dbReference type="ChEBI" id="CHEBI:43474"/>
        <dbReference type="ChEBI" id="CHEBI:57701"/>
        <dbReference type="EC" id="4.2.3.5"/>
    </reaction>
</comment>
<comment type="cofactor">
    <cofactor evidence="1">
        <name>FMNH2</name>
        <dbReference type="ChEBI" id="CHEBI:57618"/>
    </cofactor>
    <text evidence="1">Reduced FMN (FMNH(2)).</text>
</comment>
<comment type="pathway">
    <text evidence="1">Metabolic intermediate biosynthesis; chorismate biosynthesis; chorismate from D-erythrose 4-phosphate and phosphoenolpyruvate: step 7/7.</text>
</comment>
<comment type="subunit">
    <text evidence="1">Homotetramer.</text>
</comment>
<comment type="similarity">
    <text evidence="1">Belongs to the chorismate synthase family.</text>
</comment>
<keyword id="KW-0028">Amino-acid biosynthesis</keyword>
<keyword id="KW-0057">Aromatic amino acid biosynthesis</keyword>
<keyword id="KW-0274">FAD</keyword>
<keyword id="KW-0285">Flavoprotein</keyword>
<keyword id="KW-0288">FMN</keyword>
<keyword id="KW-0456">Lyase</keyword>
<keyword id="KW-0521">NADP</keyword>
<keyword id="KW-1185">Reference proteome</keyword>